<organism>
    <name type="scientific">Salmonella typhimurium (strain LT2 / SGSC1412 / ATCC 700720)</name>
    <dbReference type="NCBI Taxonomy" id="99287"/>
    <lineage>
        <taxon>Bacteria</taxon>
        <taxon>Pseudomonadati</taxon>
        <taxon>Pseudomonadota</taxon>
        <taxon>Gammaproteobacteria</taxon>
        <taxon>Enterobacterales</taxon>
        <taxon>Enterobacteriaceae</taxon>
        <taxon>Salmonella</taxon>
    </lineage>
</organism>
<comment type="function">
    <text evidence="1">Part of the ABC transporter complex BtuCDF involved in vitamin B12 import. Binds vitamin B12 and delivers it to the periplasmic surface of BtuC (By similarity).</text>
</comment>
<comment type="subunit">
    <text evidence="1">The complex is composed of two ATP-binding proteins (BtuD), two transmembrane proteins (BtuC) and a solute-binding protein (BtuF).</text>
</comment>
<comment type="subcellular location">
    <subcellularLocation>
        <location evidence="1">Periplasm</location>
    </subcellularLocation>
</comment>
<comment type="similarity">
    <text evidence="3">Belongs to the BtuF family.</text>
</comment>
<evidence type="ECO:0000250" key="1"/>
<evidence type="ECO:0000255" key="2"/>
<evidence type="ECO:0000305" key="3"/>
<sequence length="266" mass="29284">MAKQMFRALVALLLTLPVWLYAAPRVITLSPANTELAFAAGITPVGVSSYSDYPPEAQKIEQVSTWQGMNLERIVALKPDLVVAWRGGNAERQVNQLTSLGIKVMWVDAVTIEQIADTLRQLAAWSPQPEKAQQAAQTLLNEYAALNAEYAGKAKKRVFLQFGMNPLFTSGKGSIQHQVLTTCGGENVFADSRVPWPQVSREQVLARHPQAIIVAGKAGEILKIEQYWGNLLKIPVIPLNSDWFERASPRIILAAKQLCNALSQVN</sequence>
<proteinExistence type="inferred from homology"/>
<feature type="signal peptide" evidence="2">
    <location>
        <begin position="1"/>
        <end position="22"/>
    </location>
</feature>
<feature type="chain" id="PRO_0000003506" description="Vitamin B12-binding protein">
    <location>
        <begin position="23"/>
        <end position="266"/>
    </location>
</feature>
<feature type="domain" description="Fe/B12 periplasmic-binding">
    <location>
        <begin position="25"/>
        <end position="266"/>
    </location>
</feature>
<feature type="binding site" evidence="1">
    <location>
        <position position="50"/>
    </location>
    <ligand>
        <name>cyanocob(III)alamin</name>
        <dbReference type="ChEBI" id="CHEBI:17439"/>
    </ligand>
</feature>
<feature type="binding site" evidence="1">
    <location>
        <begin position="242"/>
        <end position="246"/>
    </location>
    <ligand>
        <name>cyanocob(III)alamin</name>
        <dbReference type="ChEBI" id="CHEBI:17439"/>
    </ligand>
</feature>
<feature type="site" description="Important for BtuC binding" evidence="1">
    <location>
        <position position="72"/>
    </location>
</feature>
<feature type="site" description="Important for BtuC binding" evidence="1">
    <location>
        <position position="202"/>
    </location>
</feature>
<feature type="disulfide bond" evidence="1">
    <location>
        <begin position="183"/>
        <end position="259"/>
    </location>
</feature>
<feature type="sequence conflict" description="In Ref. 1; AAC98382." evidence="3" ref="1">
    <original>E</original>
    <variation>Q</variation>
    <location>
        <position position="149"/>
    </location>
</feature>
<feature type="sequence conflict" description="In Ref. 1; AAC98382." evidence="3" ref="1">
    <original>A</original>
    <variation>P</variation>
    <location>
        <position position="154"/>
    </location>
</feature>
<feature type="sequence conflict" description="In Ref. 1; AAC98382." evidence="3" ref="1">
    <original>R</original>
    <variation>H</variation>
    <location>
        <position position="157"/>
    </location>
</feature>
<feature type="sequence conflict" description="In Ref. 1; AAC98382." evidence="3" ref="1">
    <original>S</original>
    <variation>N</variation>
    <location>
        <position position="170"/>
    </location>
</feature>
<feature type="sequence conflict" description="In Ref. 1; AAC98382." evidence="3" ref="1">
    <original>T</original>
    <variation>A</variation>
    <location>
        <position position="181"/>
    </location>
</feature>
<feature type="sequence conflict" description="In Ref. 1; AAC98382." evidence="3" ref="1">
    <original>G</original>
    <variation>W</variation>
    <location>
        <position position="185"/>
    </location>
</feature>
<feature type="sequence conflict" description="In Ref. 1; AAC98382." evidence="3" ref="1">
    <original>QVS</original>
    <variation>HVI</variation>
    <location>
        <begin position="198"/>
        <end position="200"/>
    </location>
</feature>
<feature type="sequence conflict" description="In Ref. 1; AAC98382." evidence="3" ref="1">
    <original>A</original>
    <variation>G</variation>
    <location>
        <position position="206"/>
    </location>
</feature>
<feature type="sequence conflict" description="In Ref. 1; AAC98382." evidence="3" ref="1">
    <original>Q</original>
    <variation>H</variation>
    <location>
        <position position="210"/>
    </location>
</feature>
<feature type="sequence conflict" description="In Ref. 1; AAC98382." evidence="3" ref="1">
    <original>AGEILKI</original>
    <variation>TVGNQRY</variation>
    <location>
        <begin position="218"/>
        <end position="224"/>
    </location>
</feature>
<accession>Q8ZRP7</accession>
<accession>Q9ZFP9</accession>
<protein>
    <recommendedName>
        <fullName>Vitamin B12-binding protein</fullName>
    </recommendedName>
</protein>
<dbReference type="EMBL" id="AF096877">
    <property type="protein sequence ID" value="AAC98382.1"/>
    <property type="molecule type" value="Genomic_DNA"/>
</dbReference>
<dbReference type="EMBL" id="AE006468">
    <property type="protein sequence ID" value="AAL19170.1"/>
    <property type="molecule type" value="Genomic_DNA"/>
</dbReference>
<dbReference type="RefSeq" id="NP_459211.1">
    <property type="nucleotide sequence ID" value="NC_003197.2"/>
</dbReference>
<dbReference type="RefSeq" id="WP_001118843.1">
    <property type="nucleotide sequence ID" value="NC_003197.2"/>
</dbReference>
<dbReference type="SMR" id="Q8ZRP7"/>
<dbReference type="STRING" id="99287.STM0206"/>
<dbReference type="TCDB" id="3.A.1.13.1">
    <property type="family name" value="the atp-binding cassette (abc) superfamily"/>
</dbReference>
<dbReference type="PaxDb" id="99287-STM0206"/>
<dbReference type="GeneID" id="1251724"/>
<dbReference type="KEGG" id="stm:STM0206"/>
<dbReference type="PATRIC" id="fig|99287.12.peg.219"/>
<dbReference type="HOGENOM" id="CLU_038034_2_5_6"/>
<dbReference type="OMA" id="WQGINLE"/>
<dbReference type="PhylomeDB" id="Q8ZRP7"/>
<dbReference type="BioCyc" id="SENT99287:STM0206-MONOMER"/>
<dbReference type="Proteomes" id="UP000001014">
    <property type="component" value="Chromosome"/>
</dbReference>
<dbReference type="GO" id="GO:0042597">
    <property type="term" value="C:periplasmic space"/>
    <property type="evidence" value="ECO:0007669"/>
    <property type="project" value="UniProtKB-SubCell"/>
</dbReference>
<dbReference type="GO" id="GO:0031419">
    <property type="term" value="F:cobalamin binding"/>
    <property type="evidence" value="ECO:0007669"/>
    <property type="project" value="InterPro"/>
</dbReference>
<dbReference type="GO" id="GO:0015889">
    <property type="term" value="P:cobalamin transport"/>
    <property type="evidence" value="ECO:0007669"/>
    <property type="project" value="UniProtKB-UniRule"/>
</dbReference>
<dbReference type="CDD" id="cd01144">
    <property type="entry name" value="BtuF"/>
    <property type="match status" value="1"/>
</dbReference>
<dbReference type="Gene3D" id="3.40.50.1980">
    <property type="entry name" value="Nitrogenase molybdenum iron protein domain"/>
    <property type="match status" value="2"/>
</dbReference>
<dbReference type="HAMAP" id="MF_01000">
    <property type="entry name" value="BtuF"/>
    <property type="match status" value="1"/>
</dbReference>
<dbReference type="InterPro" id="IPR050902">
    <property type="entry name" value="ABC_Transporter_SBP"/>
</dbReference>
<dbReference type="InterPro" id="IPR002491">
    <property type="entry name" value="ABC_transptr_periplasmic_BD"/>
</dbReference>
<dbReference type="InterPro" id="IPR023544">
    <property type="entry name" value="ABC_transptr_vit_B12-bd"/>
</dbReference>
<dbReference type="InterPro" id="IPR054828">
    <property type="entry name" value="Vit_B12_bind_prot"/>
</dbReference>
<dbReference type="NCBIfam" id="NF002894">
    <property type="entry name" value="PRK03379.1"/>
    <property type="match status" value="1"/>
</dbReference>
<dbReference type="NCBIfam" id="NF038402">
    <property type="entry name" value="TroA_like"/>
    <property type="match status" value="1"/>
</dbReference>
<dbReference type="PANTHER" id="PTHR30535:SF34">
    <property type="entry name" value="MOLYBDATE-BINDING PROTEIN MOLA"/>
    <property type="match status" value="1"/>
</dbReference>
<dbReference type="PANTHER" id="PTHR30535">
    <property type="entry name" value="VITAMIN B12-BINDING PROTEIN"/>
    <property type="match status" value="1"/>
</dbReference>
<dbReference type="Pfam" id="PF01497">
    <property type="entry name" value="Peripla_BP_2"/>
    <property type="match status" value="1"/>
</dbReference>
<dbReference type="SUPFAM" id="SSF53807">
    <property type="entry name" value="Helical backbone' metal receptor"/>
    <property type="match status" value="1"/>
</dbReference>
<dbReference type="PROSITE" id="PS50983">
    <property type="entry name" value="FE_B12_PBP"/>
    <property type="match status" value="1"/>
</dbReference>
<gene>
    <name type="primary">btuF</name>
    <name type="ordered locus">STM0206</name>
</gene>
<keyword id="KW-1015">Disulfide bond</keyword>
<keyword id="KW-0574">Periplasm</keyword>
<keyword id="KW-1185">Reference proteome</keyword>
<keyword id="KW-0732">Signal</keyword>
<keyword id="KW-0813">Transport</keyword>
<name>BTUF_SALTY</name>
<reference key="1">
    <citation type="journal article" date="1999" name="J. Bacteriol.">
        <title>A new class of cobalamin transport mutants (btuF) provides genetic evidence for a periplasmic binding protein in Salmonella typhimurium.</title>
        <authorList>
            <person name="Van Bibber M."/>
            <person name="Bradbeer C."/>
            <person name="Clark N."/>
            <person name="Roth J.R."/>
        </authorList>
    </citation>
    <scope>NUCLEOTIDE SEQUENCE [GENOMIC DNA]</scope>
    <source>
        <strain>LT2</strain>
    </source>
</reference>
<reference key="2">
    <citation type="journal article" date="2001" name="Nature">
        <title>Complete genome sequence of Salmonella enterica serovar Typhimurium LT2.</title>
        <authorList>
            <person name="McClelland M."/>
            <person name="Sanderson K.E."/>
            <person name="Spieth J."/>
            <person name="Clifton S.W."/>
            <person name="Latreille P."/>
            <person name="Courtney L."/>
            <person name="Porwollik S."/>
            <person name="Ali J."/>
            <person name="Dante M."/>
            <person name="Du F."/>
            <person name="Hou S."/>
            <person name="Layman D."/>
            <person name="Leonard S."/>
            <person name="Nguyen C."/>
            <person name="Scott K."/>
            <person name="Holmes A."/>
            <person name="Grewal N."/>
            <person name="Mulvaney E."/>
            <person name="Ryan E."/>
            <person name="Sun H."/>
            <person name="Florea L."/>
            <person name="Miller W."/>
            <person name="Stoneking T."/>
            <person name="Nhan M."/>
            <person name="Waterston R."/>
            <person name="Wilson R.K."/>
        </authorList>
    </citation>
    <scope>NUCLEOTIDE SEQUENCE [LARGE SCALE GENOMIC DNA]</scope>
    <source>
        <strain>LT2 / SGSC1412 / ATCC 700720</strain>
    </source>
</reference>